<proteinExistence type="inferred from homology"/>
<dbReference type="EMBL" id="AE016877">
    <property type="protein sequence ID" value="AAP11944.1"/>
    <property type="molecule type" value="Genomic_DNA"/>
</dbReference>
<dbReference type="EMBL" id="AE016877">
    <property type="protein sequence ID" value="AAP11947.1"/>
    <property type="molecule type" value="Genomic_DNA"/>
</dbReference>
<dbReference type="RefSeq" id="NP_834743.1">
    <property type="nucleotide sequence ID" value="NC_004722.1"/>
</dbReference>
<dbReference type="RefSeq" id="NP_834746.1">
    <property type="nucleotide sequence ID" value="NC_004722.1"/>
</dbReference>
<dbReference type="RefSeq" id="WP_001085924.1">
    <property type="nucleotide sequence ID" value="NC_004722.1"/>
</dbReference>
<dbReference type="SMR" id="Q812H1"/>
<dbReference type="STRING" id="226900.BC_5075"/>
<dbReference type="MetOSite" id="Q812H1"/>
<dbReference type="KEGG" id="bce:BC5075"/>
<dbReference type="KEGG" id="bce:BC5078"/>
<dbReference type="PATRIC" id="fig|226900.8.peg.5234"/>
<dbReference type="HOGENOM" id="CLU_074237_2_1_9"/>
<dbReference type="OrthoDB" id="9802408at2"/>
<dbReference type="Proteomes" id="UP000001417">
    <property type="component" value="Chromosome"/>
</dbReference>
<dbReference type="GO" id="GO:0022625">
    <property type="term" value="C:cytosolic large ribosomal subunit"/>
    <property type="evidence" value="ECO:0000318"/>
    <property type="project" value="GO_Central"/>
</dbReference>
<dbReference type="GO" id="GO:0070180">
    <property type="term" value="F:large ribosomal subunit rRNA binding"/>
    <property type="evidence" value="ECO:0000318"/>
    <property type="project" value="GO_Central"/>
</dbReference>
<dbReference type="GO" id="GO:0003735">
    <property type="term" value="F:structural constituent of ribosome"/>
    <property type="evidence" value="ECO:0000318"/>
    <property type="project" value="GO_Central"/>
</dbReference>
<dbReference type="GO" id="GO:0006412">
    <property type="term" value="P:translation"/>
    <property type="evidence" value="ECO:0000318"/>
    <property type="project" value="GO_Central"/>
</dbReference>
<dbReference type="CDD" id="cd00349">
    <property type="entry name" value="Ribosomal_L11"/>
    <property type="match status" value="1"/>
</dbReference>
<dbReference type="FunFam" id="1.10.10.250:FF:000001">
    <property type="entry name" value="50S ribosomal protein L11"/>
    <property type="match status" value="1"/>
</dbReference>
<dbReference type="FunFam" id="3.30.1550.10:FF:000005">
    <property type="entry name" value="50S ribosomal protein L11"/>
    <property type="match status" value="1"/>
</dbReference>
<dbReference type="Gene3D" id="1.10.10.250">
    <property type="entry name" value="Ribosomal protein L11, C-terminal domain"/>
    <property type="match status" value="1"/>
</dbReference>
<dbReference type="Gene3D" id="3.30.1550.10">
    <property type="entry name" value="Ribosomal protein L11/L12, N-terminal domain"/>
    <property type="match status" value="1"/>
</dbReference>
<dbReference type="HAMAP" id="MF_00736">
    <property type="entry name" value="Ribosomal_uL11"/>
    <property type="match status" value="1"/>
</dbReference>
<dbReference type="InterPro" id="IPR000911">
    <property type="entry name" value="Ribosomal_uL11"/>
</dbReference>
<dbReference type="InterPro" id="IPR006519">
    <property type="entry name" value="Ribosomal_uL11_bac-typ"/>
</dbReference>
<dbReference type="InterPro" id="IPR020783">
    <property type="entry name" value="Ribosomal_uL11_C"/>
</dbReference>
<dbReference type="InterPro" id="IPR036769">
    <property type="entry name" value="Ribosomal_uL11_C_sf"/>
</dbReference>
<dbReference type="InterPro" id="IPR020784">
    <property type="entry name" value="Ribosomal_uL11_N"/>
</dbReference>
<dbReference type="InterPro" id="IPR036796">
    <property type="entry name" value="Ribosomal_uL11_N_sf"/>
</dbReference>
<dbReference type="NCBIfam" id="TIGR01632">
    <property type="entry name" value="L11_bact"/>
    <property type="match status" value="1"/>
</dbReference>
<dbReference type="PANTHER" id="PTHR11661">
    <property type="entry name" value="60S RIBOSOMAL PROTEIN L12"/>
    <property type="match status" value="1"/>
</dbReference>
<dbReference type="PANTHER" id="PTHR11661:SF1">
    <property type="entry name" value="LARGE RIBOSOMAL SUBUNIT PROTEIN UL11M"/>
    <property type="match status" value="1"/>
</dbReference>
<dbReference type="Pfam" id="PF00298">
    <property type="entry name" value="Ribosomal_L11"/>
    <property type="match status" value="1"/>
</dbReference>
<dbReference type="Pfam" id="PF03946">
    <property type="entry name" value="Ribosomal_L11_N"/>
    <property type="match status" value="1"/>
</dbReference>
<dbReference type="SMART" id="SM00649">
    <property type="entry name" value="RL11"/>
    <property type="match status" value="1"/>
</dbReference>
<dbReference type="SUPFAM" id="SSF54747">
    <property type="entry name" value="Ribosomal L11/L12e N-terminal domain"/>
    <property type="match status" value="1"/>
</dbReference>
<dbReference type="SUPFAM" id="SSF46906">
    <property type="entry name" value="Ribosomal protein L11, C-terminal domain"/>
    <property type="match status" value="1"/>
</dbReference>
<protein>
    <recommendedName>
        <fullName evidence="1">Large ribosomal subunit protein uL11B/uL11C</fullName>
    </recommendedName>
    <alternativeName>
        <fullName evidence="2">50S ribosomal protein L11-2/L11-3</fullName>
    </alternativeName>
</protein>
<gene>
    <name evidence="1" type="primary">rplK2</name>
    <name type="ordered locus">BC_5075</name>
</gene>
<gene>
    <name evidence="1" type="primary">rplK3</name>
    <name type="ordered locus">BC_5078</name>
</gene>
<evidence type="ECO:0000255" key="1">
    <source>
        <dbReference type="HAMAP-Rule" id="MF_00736"/>
    </source>
</evidence>
<evidence type="ECO:0000305" key="2"/>
<keyword id="KW-0488">Methylation</keyword>
<keyword id="KW-1185">Reference proteome</keyword>
<keyword id="KW-0687">Ribonucleoprotein</keyword>
<keyword id="KW-0689">Ribosomal protein</keyword>
<keyword id="KW-0694">RNA-binding</keyword>
<keyword id="KW-0699">rRNA-binding</keyword>
<reference key="1">
    <citation type="journal article" date="2003" name="Nature">
        <title>Genome sequence of Bacillus cereus and comparative analysis with Bacillus anthracis.</title>
        <authorList>
            <person name="Ivanova N."/>
            <person name="Sorokin A."/>
            <person name="Anderson I."/>
            <person name="Galleron N."/>
            <person name="Candelon B."/>
            <person name="Kapatral V."/>
            <person name="Bhattacharyya A."/>
            <person name="Reznik G."/>
            <person name="Mikhailova N."/>
            <person name="Lapidus A."/>
            <person name="Chu L."/>
            <person name="Mazur M."/>
            <person name="Goltsman E."/>
            <person name="Larsen N."/>
            <person name="D'Souza M."/>
            <person name="Walunas T."/>
            <person name="Grechkin Y."/>
            <person name="Pusch G."/>
            <person name="Haselkorn R."/>
            <person name="Fonstein M."/>
            <person name="Ehrlich S.D."/>
            <person name="Overbeek R."/>
            <person name="Kyrpides N.C."/>
        </authorList>
    </citation>
    <scope>NUCLEOTIDE SEQUENCE [LARGE SCALE GENOMIC DNA]</scope>
    <source>
        <strain>ATCC 14579 / DSM 31 / CCUG 7414 / JCM 2152 / NBRC 15305 / NCIMB 9373 / NCTC 2599 / NRRL B-3711</strain>
    </source>
</reference>
<name>RL11B_BACCR</name>
<feature type="chain" id="PRO_0000104238" description="Large ribosomal subunit protein uL11B/uL11C">
    <location>
        <begin position="1"/>
        <end position="141"/>
    </location>
</feature>
<comment type="function">
    <text evidence="1">Forms part of the ribosomal stalk which helps the ribosome interact with GTP-bound translation factors.</text>
</comment>
<comment type="subunit">
    <text evidence="1">Part of the ribosomal stalk of the 50S ribosomal subunit. Interacts with L10 and the large rRNA to form the base of the stalk. L10 forms an elongated spine to which L12 dimers bind in a sequential fashion forming a multimeric L10(L12)X complex.</text>
</comment>
<comment type="PTM">
    <text evidence="1">One or more lysine residues are methylated.</text>
</comment>
<comment type="similarity">
    <text evidence="1">Belongs to the universal ribosomal protein uL11 family.</text>
</comment>
<accession>Q812H1</accession>
<sequence length="141" mass="15078">MAKKVLKVVKIQLPAGKANPAPPVGTVLGPTGVNIMMVCKEYNALTQGQAGMIIPAEITIYEDRSFSMKIKTAPVAELLKREAGISKGSGEPNKSKIGSITEEKLREIAEYKFPDMNAASVEAAMRTIEGTARSMGITVQK</sequence>
<organism>
    <name type="scientific">Bacillus cereus (strain ATCC 14579 / DSM 31 / CCUG 7414 / JCM 2152 / NBRC 15305 / NCIMB 9373 / NCTC 2599 / NRRL B-3711)</name>
    <dbReference type="NCBI Taxonomy" id="226900"/>
    <lineage>
        <taxon>Bacteria</taxon>
        <taxon>Bacillati</taxon>
        <taxon>Bacillota</taxon>
        <taxon>Bacilli</taxon>
        <taxon>Bacillales</taxon>
        <taxon>Bacillaceae</taxon>
        <taxon>Bacillus</taxon>
        <taxon>Bacillus cereus group</taxon>
    </lineage>
</organism>